<proteinExistence type="inferred from homology"/>
<feature type="chain" id="PRO_1000133044" description="Probable GTP-binding protein EngB">
    <location>
        <begin position="1"/>
        <end position="198"/>
    </location>
</feature>
<feature type="domain" description="EngB-type G" evidence="1">
    <location>
        <begin position="22"/>
        <end position="195"/>
    </location>
</feature>
<feature type="binding site" evidence="1">
    <location>
        <begin position="30"/>
        <end position="37"/>
    </location>
    <ligand>
        <name>GTP</name>
        <dbReference type="ChEBI" id="CHEBI:37565"/>
    </ligand>
</feature>
<feature type="binding site" evidence="1">
    <location>
        <position position="37"/>
    </location>
    <ligand>
        <name>Mg(2+)</name>
        <dbReference type="ChEBI" id="CHEBI:18420"/>
    </ligand>
</feature>
<feature type="binding site" evidence="1">
    <location>
        <begin position="57"/>
        <end position="61"/>
    </location>
    <ligand>
        <name>GTP</name>
        <dbReference type="ChEBI" id="CHEBI:37565"/>
    </ligand>
</feature>
<feature type="binding site" evidence="1">
    <location>
        <position position="59"/>
    </location>
    <ligand>
        <name>Mg(2+)</name>
        <dbReference type="ChEBI" id="CHEBI:18420"/>
    </ligand>
</feature>
<feature type="binding site" evidence="1">
    <location>
        <begin position="75"/>
        <end position="78"/>
    </location>
    <ligand>
        <name>GTP</name>
        <dbReference type="ChEBI" id="CHEBI:37565"/>
    </ligand>
</feature>
<feature type="binding site" evidence="1">
    <location>
        <begin position="142"/>
        <end position="145"/>
    </location>
    <ligand>
        <name>GTP</name>
        <dbReference type="ChEBI" id="CHEBI:37565"/>
    </ligand>
</feature>
<feature type="binding site" evidence="1">
    <location>
        <begin position="174"/>
        <end position="176"/>
    </location>
    <ligand>
        <name>GTP</name>
        <dbReference type="ChEBI" id="CHEBI:37565"/>
    </ligand>
</feature>
<dbReference type="EMBL" id="CP001215">
    <property type="protein sequence ID" value="ACP16412.1"/>
    <property type="molecule type" value="Genomic_DNA"/>
</dbReference>
<dbReference type="SMR" id="C3L700"/>
<dbReference type="KEGG" id="bah:BAMEG_4736"/>
<dbReference type="HOGENOM" id="CLU_033732_3_0_9"/>
<dbReference type="GO" id="GO:0005829">
    <property type="term" value="C:cytosol"/>
    <property type="evidence" value="ECO:0007669"/>
    <property type="project" value="TreeGrafter"/>
</dbReference>
<dbReference type="GO" id="GO:0005525">
    <property type="term" value="F:GTP binding"/>
    <property type="evidence" value="ECO:0007669"/>
    <property type="project" value="UniProtKB-UniRule"/>
</dbReference>
<dbReference type="GO" id="GO:0046872">
    <property type="term" value="F:metal ion binding"/>
    <property type="evidence" value="ECO:0007669"/>
    <property type="project" value="UniProtKB-KW"/>
</dbReference>
<dbReference type="GO" id="GO:0000917">
    <property type="term" value="P:division septum assembly"/>
    <property type="evidence" value="ECO:0007669"/>
    <property type="project" value="UniProtKB-KW"/>
</dbReference>
<dbReference type="CDD" id="cd01876">
    <property type="entry name" value="YihA_EngB"/>
    <property type="match status" value="1"/>
</dbReference>
<dbReference type="FunFam" id="3.40.50.300:FF:000098">
    <property type="entry name" value="Probable GTP-binding protein EngB"/>
    <property type="match status" value="1"/>
</dbReference>
<dbReference type="Gene3D" id="3.40.50.300">
    <property type="entry name" value="P-loop containing nucleotide triphosphate hydrolases"/>
    <property type="match status" value="1"/>
</dbReference>
<dbReference type="HAMAP" id="MF_00321">
    <property type="entry name" value="GTPase_EngB"/>
    <property type="match status" value="1"/>
</dbReference>
<dbReference type="InterPro" id="IPR030393">
    <property type="entry name" value="G_ENGB_dom"/>
</dbReference>
<dbReference type="InterPro" id="IPR006073">
    <property type="entry name" value="GTP-bd"/>
</dbReference>
<dbReference type="InterPro" id="IPR019987">
    <property type="entry name" value="GTP-bd_ribosome_bio_YsxC"/>
</dbReference>
<dbReference type="InterPro" id="IPR027417">
    <property type="entry name" value="P-loop_NTPase"/>
</dbReference>
<dbReference type="InterPro" id="IPR005225">
    <property type="entry name" value="Small_GTP-bd"/>
</dbReference>
<dbReference type="NCBIfam" id="TIGR03598">
    <property type="entry name" value="GTPase_YsxC"/>
    <property type="match status" value="1"/>
</dbReference>
<dbReference type="NCBIfam" id="TIGR00231">
    <property type="entry name" value="small_GTP"/>
    <property type="match status" value="1"/>
</dbReference>
<dbReference type="PANTHER" id="PTHR11649:SF13">
    <property type="entry name" value="ENGB-TYPE G DOMAIN-CONTAINING PROTEIN"/>
    <property type="match status" value="1"/>
</dbReference>
<dbReference type="PANTHER" id="PTHR11649">
    <property type="entry name" value="MSS1/TRME-RELATED GTP-BINDING PROTEIN"/>
    <property type="match status" value="1"/>
</dbReference>
<dbReference type="Pfam" id="PF01926">
    <property type="entry name" value="MMR_HSR1"/>
    <property type="match status" value="1"/>
</dbReference>
<dbReference type="SUPFAM" id="SSF52540">
    <property type="entry name" value="P-loop containing nucleoside triphosphate hydrolases"/>
    <property type="match status" value="1"/>
</dbReference>
<dbReference type="PROSITE" id="PS51706">
    <property type="entry name" value="G_ENGB"/>
    <property type="match status" value="1"/>
</dbReference>
<keyword id="KW-0131">Cell cycle</keyword>
<keyword id="KW-0132">Cell division</keyword>
<keyword id="KW-0342">GTP-binding</keyword>
<keyword id="KW-0460">Magnesium</keyword>
<keyword id="KW-0479">Metal-binding</keyword>
<keyword id="KW-0547">Nucleotide-binding</keyword>
<keyword id="KW-0717">Septation</keyword>
<reference key="1">
    <citation type="submission" date="2008-10" db="EMBL/GenBank/DDBJ databases">
        <title>Genome sequence of Bacillus anthracis str. CDC 684.</title>
        <authorList>
            <person name="Dodson R.J."/>
            <person name="Munk A.C."/>
            <person name="Brettin T."/>
            <person name="Bruce D."/>
            <person name="Detter C."/>
            <person name="Tapia R."/>
            <person name="Han C."/>
            <person name="Sutton G."/>
            <person name="Sims D."/>
        </authorList>
    </citation>
    <scope>NUCLEOTIDE SEQUENCE [LARGE SCALE GENOMIC DNA]</scope>
    <source>
        <strain>CDC 684 / NRRL 3495</strain>
    </source>
</reference>
<gene>
    <name evidence="1" type="primary">engB</name>
    <name type="ordered locus">BAMEG_4736</name>
</gene>
<comment type="function">
    <text evidence="1">Necessary for normal cell division and for the maintenance of normal septation.</text>
</comment>
<comment type="cofactor">
    <cofactor evidence="1">
        <name>Mg(2+)</name>
        <dbReference type="ChEBI" id="CHEBI:18420"/>
    </cofactor>
</comment>
<comment type="similarity">
    <text evidence="1">Belongs to the TRAFAC class TrmE-Era-EngA-EngB-Septin-like GTPase superfamily. EngB GTPase family.</text>
</comment>
<accession>C3L700</accession>
<evidence type="ECO:0000255" key="1">
    <source>
        <dbReference type="HAMAP-Rule" id="MF_00321"/>
    </source>
</evidence>
<protein>
    <recommendedName>
        <fullName evidence="1">Probable GTP-binding protein EngB</fullName>
    </recommendedName>
</protein>
<name>ENGB_BACAC</name>
<organism>
    <name type="scientific">Bacillus anthracis (strain CDC 684 / NRRL 3495)</name>
    <dbReference type="NCBI Taxonomy" id="568206"/>
    <lineage>
        <taxon>Bacteria</taxon>
        <taxon>Bacillati</taxon>
        <taxon>Bacillota</taxon>
        <taxon>Bacilli</taxon>
        <taxon>Bacillales</taxon>
        <taxon>Bacillaceae</taxon>
        <taxon>Bacillus</taxon>
        <taxon>Bacillus cereus group</taxon>
    </lineage>
</organism>
<sequence>MKVTKADIVISAVKPEQYPDGDLPEIALAGRSNVGKSSFINKILNRKKLVRISSKPGKTQTLNFFLINEMMHFVDVPGYGYAKVSKTERAAWGKMIETYFTTREQLDAAVLVVDLRHKPTNDDVMMYDFLKHYDIPTIIIATKADKIPKGKWQKHLKVVKETLDIESGDEVVLFSSETGLGKEEAWKAIHKFTKTKNA</sequence>